<sequence length="542" mass="59745">MFCEQCEQTASGNGCHQWGACGKSPEVNAVQDLLVYCLRGLASVVLKAKEAAISTREADIFTCESLFATMTNVNFDQRRFTDYIQRCLEIRENLKAQLGSLDWSALANYQPNFNESLVSQGQEVSLELIEKVQDLDIFSLKLTAIYGVKGLASYTFHAQELGQEDDSVYQVIQETLVAIDRSDLNLNDWVAICLKVGAANLRAMELLDQGHTETYGHPIPTNVPLNPRLGKAILVSGHDIKQLAALLAQTANTGITVYTHGELLPAHGYPKLKEKYPHLYGHYGTAWQNQTKEFAKFPGAIVLTTNCLMPPHENYESKLFTLGPVGYAHINRLETVDGAIDFSPVIAKAQSLLGFTEISEPRQVMVGFAHNTVLSVADTVVNALKQGKIRHFFLVGGCDGAKPDRNYYTEFVEQVPEDCIVLTLACGKFRFFDKQLGSIEGLPRLMDLGQCNDAYSAIKIALGLANAFNVSVNEIPLSLIISWYEQKAIAVLLTLLHLGMQNIRLGPTLPAFISPNVLKFLSDTYHLQPITTPAKDLADCLG</sequence>
<organism>
    <name type="scientific">Microcystis aeruginosa (strain NIES-843 / IAM M-2473)</name>
    <dbReference type="NCBI Taxonomy" id="449447"/>
    <lineage>
        <taxon>Bacteria</taxon>
        <taxon>Bacillati</taxon>
        <taxon>Cyanobacteriota</taxon>
        <taxon>Cyanophyceae</taxon>
        <taxon>Oscillatoriophycideae</taxon>
        <taxon>Chroococcales</taxon>
        <taxon>Microcystaceae</taxon>
        <taxon>Microcystis</taxon>
    </lineage>
</organism>
<accession>B0JIR2</accession>
<dbReference type="EC" id="1.7.99.1" evidence="1"/>
<dbReference type="EMBL" id="AP009552">
    <property type="protein sequence ID" value="BAG05620.1"/>
    <property type="molecule type" value="Genomic_DNA"/>
</dbReference>
<dbReference type="RefSeq" id="WP_012268007.1">
    <property type="nucleotide sequence ID" value="NC_010296.1"/>
</dbReference>
<dbReference type="SMR" id="B0JIR2"/>
<dbReference type="STRING" id="449447.MAE_57980"/>
<dbReference type="PaxDb" id="449447-MAE_57980"/>
<dbReference type="EnsemblBacteria" id="BAG05620">
    <property type="protein sequence ID" value="BAG05620"/>
    <property type="gene ID" value="MAE_57980"/>
</dbReference>
<dbReference type="KEGG" id="mar:MAE_57980"/>
<dbReference type="PATRIC" id="fig|449447.4.peg.5309"/>
<dbReference type="eggNOG" id="COG1151">
    <property type="taxonomic scope" value="Bacteria"/>
</dbReference>
<dbReference type="HOGENOM" id="CLU_038344_2_0_3"/>
<dbReference type="BioCyc" id="MAER449447:MAE_RS25305-MONOMER"/>
<dbReference type="Proteomes" id="UP000001510">
    <property type="component" value="Chromosome"/>
</dbReference>
<dbReference type="GO" id="GO:0005737">
    <property type="term" value="C:cytoplasm"/>
    <property type="evidence" value="ECO:0007669"/>
    <property type="project" value="UniProtKB-SubCell"/>
</dbReference>
<dbReference type="GO" id="GO:0051539">
    <property type="term" value="F:4 iron, 4 sulfur cluster binding"/>
    <property type="evidence" value="ECO:0007669"/>
    <property type="project" value="UniProtKB-KW"/>
</dbReference>
<dbReference type="GO" id="GO:0050418">
    <property type="term" value="F:hydroxylamine reductase activity"/>
    <property type="evidence" value="ECO:0007669"/>
    <property type="project" value="UniProtKB-UniRule"/>
</dbReference>
<dbReference type="GO" id="GO:0046872">
    <property type="term" value="F:metal ion binding"/>
    <property type="evidence" value="ECO:0007669"/>
    <property type="project" value="UniProtKB-KW"/>
</dbReference>
<dbReference type="GO" id="GO:0004601">
    <property type="term" value="F:peroxidase activity"/>
    <property type="evidence" value="ECO:0007669"/>
    <property type="project" value="TreeGrafter"/>
</dbReference>
<dbReference type="GO" id="GO:0042542">
    <property type="term" value="P:response to hydrogen peroxide"/>
    <property type="evidence" value="ECO:0007669"/>
    <property type="project" value="TreeGrafter"/>
</dbReference>
<dbReference type="CDD" id="cd01914">
    <property type="entry name" value="HCP"/>
    <property type="match status" value="1"/>
</dbReference>
<dbReference type="FunFam" id="3.40.50.2030:FF:000001">
    <property type="entry name" value="Hydroxylamine reductase"/>
    <property type="match status" value="1"/>
</dbReference>
<dbReference type="Gene3D" id="1.20.1270.20">
    <property type="match status" value="2"/>
</dbReference>
<dbReference type="Gene3D" id="3.40.50.2030">
    <property type="match status" value="2"/>
</dbReference>
<dbReference type="HAMAP" id="MF_00069">
    <property type="entry name" value="Hydroxylam_reduct"/>
    <property type="match status" value="1"/>
</dbReference>
<dbReference type="InterPro" id="IPR004137">
    <property type="entry name" value="HCP/CODH"/>
</dbReference>
<dbReference type="InterPro" id="IPR010048">
    <property type="entry name" value="Hydroxylam_reduct"/>
</dbReference>
<dbReference type="InterPro" id="IPR016099">
    <property type="entry name" value="Prismane-like_a/b-sand"/>
</dbReference>
<dbReference type="InterPro" id="IPR011254">
    <property type="entry name" value="Prismane-like_sf"/>
</dbReference>
<dbReference type="InterPro" id="IPR016100">
    <property type="entry name" value="Prismane_a-bundle"/>
</dbReference>
<dbReference type="NCBIfam" id="TIGR01703">
    <property type="entry name" value="hybrid_clust"/>
    <property type="match status" value="1"/>
</dbReference>
<dbReference type="NCBIfam" id="NF003658">
    <property type="entry name" value="PRK05290.1"/>
    <property type="match status" value="1"/>
</dbReference>
<dbReference type="PANTHER" id="PTHR30109">
    <property type="entry name" value="HYDROXYLAMINE REDUCTASE"/>
    <property type="match status" value="1"/>
</dbReference>
<dbReference type="PANTHER" id="PTHR30109:SF0">
    <property type="entry name" value="HYDROXYLAMINE REDUCTASE"/>
    <property type="match status" value="1"/>
</dbReference>
<dbReference type="Pfam" id="PF03063">
    <property type="entry name" value="Prismane"/>
    <property type="match status" value="1"/>
</dbReference>
<dbReference type="PIRSF" id="PIRSF000076">
    <property type="entry name" value="HCP"/>
    <property type="match status" value="1"/>
</dbReference>
<dbReference type="SUPFAM" id="SSF56821">
    <property type="entry name" value="Prismane protein-like"/>
    <property type="match status" value="1"/>
</dbReference>
<evidence type="ECO:0000255" key="1">
    <source>
        <dbReference type="HAMAP-Rule" id="MF_00069"/>
    </source>
</evidence>
<keyword id="KW-0004">4Fe-4S</keyword>
<keyword id="KW-0963">Cytoplasm</keyword>
<keyword id="KW-0408">Iron</keyword>
<keyword id="KW-0411">Iron-sulfur</keyword>
<keyword id="KW-0479">Metal-binding</keyword>
<keyword id="KW-0560">Oxidoreductase</keyword>
<comment type="function">
    <text evidence="1">Catalyzes the reduction of hydroxylamine to form NH(3) and H(2)O.</text>
</comment>
<comment type="catalytic activity">
    <reaction evidence="1">
        <text>A + NH4(+) + H2O = hydroxylamine + AH2 + H(+)</text>
        <dbReference type="Rhea" id="RHEA:22052"/>
        <dbReference type="ChEBI" id="CHEBI:13193"/>
        <dbReference type="ChEBI" id="CHEBI:15377"/>
        <dbReference type="ChEBI" id="CHEBI:15378"/>
        <dbReference type="ChEBI" id="CHEBI:15429"/>
        <dbReference type="ChEBI" id="CHEBI:17499"/>
        <dbReference type="ChEBI" id="CHEBI:28938"/>
        <dbReference type="EC" id="1.7.99.1"/>
    </reaction>
</comment>
<comment type="cofactor">
    <cofactor evidence="1">
        <name>[4Fe-4S] cluster</name>
        <dbReference type="ChEBI" id="CHEBI:49883"/>
    </cofactor>
    <text evidence="1">Binds 1 [4Fe-4S] cluster.</text>
</comment>
<comment type="cofactor">
    <cofactor evidence="1">
        <name>hybrid [4Fe-2O-2S] cluster</name>
        <dbReference type="ChEBI" id="CHEBI:60519"/>
    </cofactor>
    <text evidence="1">Binds 1 hybrid [4Fe-2O-2S] cluster.</text>
</comment>
<comment type="subcellular location">
    <subcellularLocation>
        <location evidence="1">Cytoplasm</location>
    </subcellularLocation>
</comment>
<comment type="similarity">
    <text evidence="1">Belongs to the HCP family.</text>
</comment>
<feature type="chain" id="PRO_1000075114" description="Hydroxylamine reductase">
    <location>
        <begin position="1"/>
        <end position="542"/>
    </location>
</feature>
<feature type="binding site" evidence="1">
    <location>
        <position position="3"/>
    </location>
    <ligand>
        <name>[4Fe-4S] cluster</name>
        <dbReference type="ChEBI" id="CHEBI:49883"/>
    </ligand>
</feature>
<feature type="binding site" evidence="1">
    <location>
        <position position="6"/>
    </location>
    <ligand>
        <name>[4Fe-4S] cluster</name>
        <dbReference type="ChEBI" id="CHEBI:49883"/>
    </ligand>
</feature>
<feature type="binding site" evidence="1">
    <location>
        <position position="15"/>
    </location>
    <ligand>
        <name>[4Fe-4S] cluster</name>
        <dbReference type="ChEBI" id="CHEBI:49883"/>
    </ligand>
</feature>
<feature type="binding site" evidence="1">
    <location>
        <position position="21"/>
    </location>
    <ligand>
        <name>[4Fe-4S] cluster</name>
        <dbReference type="ChEBI" id="CHEBI:49883"/>
    </ligand>
</feature>
<feature type="binding site" evidence="1">
    <location>
        <position position="238"/>
    </location>
    <ligand>
        <name>hybrid [4Fe-2O-2S] cluster</name>
        <dbReference type="ChEBI" id="CHEBI:60519"/>
    </ligand>
</feature>
<feature type="binding site" evidence="1">
    <location>
        <position position="262"/>
    </location>
    <ligand>
        <name>hybrid [4Fe-2O-2S] cluster</name>
        <dbReference type="ChEBI" id="CHEBI:60519"/>
    </ligand>
</feature>
<feature type="binding site" evidence="1">
    <location>
        <position position="307"/>
    </location>
    <ligand>
        <name>hybrid [4Fe-2O-2S] cluster</name>
        <dbReference type="ChEBI" id="CHEBI:60519"/>
    </ligand>
</feature>
<feature type="binding site" description="via persulfide group" evidence="1">
    <location>
        <position position="398"/>
    </location>
    <ligand>
        <name>hybrid [4Fe-2O-2S] cluster</name>
        <dbReference type="ChEBI" id="CHEBI:60519"/>
    </ligand>
</feature>
<feature type="binding site" evidence="1">
    <location>
        <position position="426"/>
    </location>
    <ligand>
        <name>hybrid [4Fe-2O-2S] cluster</name>
        <dbReference type="ChEBI" id="CHEBI:60519"/>
    </ligand>
</feature>
<feature type="binding site" evidence="1">
    <location>
        <position position="451"/>
    </location>
    <ligand>
        <name>hybrid [4Fe-2O-2S] cluster</name>
        <dbReference type="ChEBI" id="CHEBI:60519"/>
    </ligand>
</feature>
<feature type="binding site" evidence="1">
    <location>
        <position position="485"/>
    </location>
    <ligand>
        <name>hybrid [4Fe-2O-2S] cluster</name>
        <dbReference type="ChEBI" id="CHEBI:60519"/>
    </ligand>
</feature>
<feature type="binding site" evidence="1">
    <location>
        <position position="487"/>
    </location>
    <ligand>
        <name>hybrid [4Fe-2O-2S] cluster</name>
        <dbReference type="ChEBI" id="CHEBI:60519"/>
    </ligand>
</feature>
<feature type="modified residue" description="Cysteine persulfide" evidence="1">
    <location>
        <position position="398"/>
    </location>
</feature>
<proteinExistence type="inferred from homology"/>
<protein>
    <recommendedName>
        <fullName evidence="1">Hydroxylamine reductase</fullName>
        <ecNumber evidence="1">1.7.99.1</ecNumber>
    </recommendedName>
    <alternativeName>
        <fullName evidence="1">Hybrid-cluster protein</fullName>
        <shortName evidence="1">HCP</shortName>
    </alternativeName>
    <alternativeName>
        <fullName evidence="1">Prismane protein</fullName>
    </alternativeName>
</protein>
<reference key="1">
    <citation type="journal article" date="2007" name="DNA Res.">
        <title>Complete genomic structure of the bloom-forming toxic cyanobacterium Microcystis aeruginosa NIES-843.</title>
        <authorList>
            <person name="Kaneko T."/>
            <person name="Nakajima N."/>
            <person name="Okamoto S."/>
            <person name="Suzuki I."/>
            <person name="Tanabe Y."/>
            <person name="Tamaoki M."/>
            <person name="Nakamura Y."/>
            <person name="Kasai F."/>
            <person name="Watanabe A."/>
            <person name="Kawashima K."/>
            <person name="Kishida Y."/>
            <person name="Ono A."/>
            <person name="Shimizu Y."/>
            <person name="Takahashi C."/>
            <person name="Minami C."/>
            <person name="Fujishiro T."/>
            <person name="Kohara M."/>
            <person name="Katoh M."/>
            <person name="Nakazaki N."/>
            <person name="Nakayama S."/>
            <person name="Yamada M."/>
            <person name="Tabata S."/>
            <person name="Watanabe M.M."/>
        </authorList>
    </citation>
    <scope>NUCLEOTIDE SEQUENCE [LARGE SCALE GENOMIC DNA]</scope>
    <source>
        <strain>NIES-843 / IAM M-247</strain>
    </source>
</reference>
<name>HCP_MICAN</name>
<gene>
    <name evidence="1" type="primary">hcp</name>
    <name type="ordered locus">MAE_57980</name>
</gene>